<comment type="function">
    <text evidence="1">Catalyzes the ferrous insertion into protoporphyrin IX.</text>
</comment>
<comment type="catalytic activity">
    <reaction evidence="1">
        <text>heme b + 2 H(+) = protoporphyrin IX + Fe(2+)</text>
        <dbReference type="Rhea" id="RHEA:22584"/>
        <dbReference type="ChEBI" id="CHEBI:15378"/>
        <dbReference type="ChEBI" id="CHEBI:29033"/>
        <dbReference type="ChEBI" id="CHEBI:57306"/>
        <dbReference type="ChEBI" id="CHEBI:60344"/>
        <dbReference type="EC" id="4.98.1.1"/>
    </reaction>
</comment>
<comment type="pathway">
    <text evidence="1">Porphyrin-containing compound metabolism; protoheme biosynthesis; protoheme from protoporphyrin-IX: step 1/1.</text>
</comment>
<comment type="subcellular location">
    <subcellularLocation>
        <location evidence="1">Cytoplasm</location>
    </subcellularLocation>
</comment>
<comment type="similarity">
    <text evidence="1">Belongs to the ferrochelatase family.</text>
</comment>
<organism>
    <name type="scientific">Yersinia pestis bv. Antiqua (strain Angola)</name>
    <dbReference type="NCBI Taxonomy" id="349746"/>
    <lineage>
        <taxon>Bacteria</taxon>
        <taxon>Pseudomonadati</taxon>
        <taxon>Pseudomonadota</taxon>
        <taxon>Gammaproteobacteria</taxon>
        <taxon>Enterobacterales</taxon>
        <taxon>Yersiniaceae</taxon>
        <taxon>Yersinia</taxon>
    </lineage>
</organism>
<name>HEMH_YERPG</name>
<reference key="1">
    <citation type="journal article" date="2010" name="J. Bacteriol.">
        <title>Genome sequence of the deep-rooted Yersinia pestis strain Angola reveals new insights into the evolution and pangenome of the plague bacterium.</title>
        <authorList>
            <person name="Eppinger M."/>
            <person name="Worsham P.L."/>
            <person name="Nikolich M.P."/>
            <person name="Riley D.R."/>
            <person name="Sebastian Y."/>
            <person name="Mou S."/>
            <person name="Achtman M."/>
            <person name="Lindler L.E."/>
            <person name="Ravel J."/>
        </authorList>
    </citation>
    <scope>NUCLEOTIDE SEQUENCE [LARGE SCALE GENOMIC DNA]</scope>
    <source>
        <strain>Angola</strain>
    </source>
</reference>
<accession>A9R0Q8</accession>
<protein>
    <recommendedName>
        <fullName evidence="1">Ferrochelatase</fullName>
        <ecNumber evidence="1">4.98.1.1</ecNumber>
    </recommendedName>
    <alternativeName>
        <fullName evidence="1">Heme synthase</fullName>
    </alternativeName>
    <alternativeName>
        <fullName evidence="1">Protoheme ferro-lyase</fullName>
    </alternativeName>
</protein>
<sequence length="320" mass="36185">MMQSKPGVLMVNLGTPDAPTSKAIKRYLAEFLSDRRVVDTSPLLWWPLLHGVILPLRSPRVAKLYQSVWMEEGSPLLVYSRRQQKALAARMPDIPVELGMSYGSPNLPEAIEKLLAQGVTNLVILPLYPQYSCSTSAAVWDAVARVLKGYRRLPSISFIRDYAEHPAYISALKQSVERSFAEHGQPDRLVMSFHGIPKRYAQLGDDYPIRCEDTSRALRAALPLPAEKIIMTYQSRFGREPWLTPYTDETLKSLPSQGVKHIQLICPGFSADCLETLEEIKEQNREFFLHAGGEKFEYIPALNDDEGHIALLEQLIRHNI</sequence>
<feature type="chain" id="PRO_1000116093" description="Ferrochelatase">
    <location>
        <begin position="1"/>
        <end position="320"/>
    </location>
</feature>
<feature type="binding site" evidence="1">
    <location>
        <position position="194"/>
    </location>
    <ligand>
        <name>Fe cation</name>
        <dbReference type="ChEBI" id="CHEBI:24875"/>
    </ligand>
</feature>
<feature type="binding site" evidence="1">
    <location>
        <position position="275"/>
    </location>
    <ligand>
        <name>Fe cation</name>
        <dbReference type="ChEBI" id="CHEBI:24875"/>
    </ligand>
</feature>
<dbReference type="EC" id="4.98.1.1" evidence="1"/>
<dbReference type="EMBL" id="CP000901">
    <property type="protein sequence ID" value="ABX86770.1"/>
    <property type="molecule type" value="Genomic_DNA"/>
</dbReference>
<dbReference type="RefSeq" id="WP_002208599.1">
    <property type="nucleotide sequence ID" value="NZ_CP009935.1"/>
</dbReference>
<dbReference type="SMR" id="A9R0Q8"/>
<dbReference type="GeneID" id="57975594"/>
<dbReference type="KEGG" id="ypg:YpAngola_A2895"/>
<dbReference type="UniPathway" id="UPA00252">
    <property type="reaction ID" value="UER00325"/>
</dbReference>
<dbReference type="GO" id="GO:0005737">
    <property type="term" value="C:cytoplasm"/>
    <property type="evidence" value="ECO:0007669"/>
    <property type="project" value="UniProtKB-SubCell"/>
</dbReference>
<dbReference type="GO" id="GO:0004325">
    <property type="term" value="F:ferrochelatase activity"/>
    <property type="evidence" value="ECO:0007669"/>
    <property type="project" value="UniProtKB-UniRule"/>
</dbReference>
<dbReference type="GO" id="GO:0046872">
    <property type="term" value="F:metal ion binding"/>
    <property type="evidence" value="ECO:0007669"/>
    <property type="project" value="UniProtKB-KW"/>
</dbReference>
<dbReference type="GO" id="GO:0006783">
    <property type="term" value="P:heme biosynthetic process"/>
    <property type="evidence" value="ECO:0007669"/>
    <property type="project" value="UniProtKB-UniRule"/>
</dbReference>
<dbReference type="CDD" id="cd00419">
    <property type="entry name" value="Ferrochelatase_C"/>
    <property type="match status" value="1"/>
</dbReference>
<dbReference type="CDD" id="cd03411">
    <property type="entry name" value="Ferrochelatase_N"/>
    <property type="match status" value="1"/>
</dbReference>
<dbReference type="FunFam" id="3.40.50.1400:FF:000004">
    <property type="entry name" value="Ferrochelatase"/>
    <property type="match status" value="1"/>
</dbReference>
<dbReference type="Gene3D" id="3.40.50.1400">
    <property type="match status" value="2"/>
</dbReference>
<dbReference type="HAMAP" id="MF_00323">
    <property type="entry name" value="Ferrochelatase"/>
    <property type="match status" value="1"/>
</dbReference>
<dbReference type="InterPro" id="IPR001015">
    <property type="entry name" value="Ferrochelatase"/>
</dbReference>
<dbReference type="InterPro" id="IPR019772">
    <property type="entry name" value="Ferrochelatase_AS"/>
</dbReference>
<dbReference type="InterPro" id="IPR033644">
    <property type="entry name" value="Ferrochelatase_C"/>
</dbReference>
<dbReference type="InterPro" id="IPR033659">
    <property type="entry name" value="Ferrochelatase_N"/>
</dbReference>
<dbReference type="NCBIfam" id="TIGR00109">
    <property type="entry name" value="hemH"/>
    <property type="match status" value="1"/>
</dbReference>
<dbReference type="PANTHER" id="PTHR11108">
    <property type="entry name" value="FERROCHELATASE"/>
    <property type="match status" value="1"/>
</dbReference>
<dbReference type="PANTHER" id="PTHR11108:SF1">
    <property type="entry name" value="FERROCHELATASE, MITOCHONDRIAL"/>
    <property type="match status" value="1"/>
</dbReference>
<dbReference type="Pfam" id="PF00762">
    <property type="entry name" value="Ferrochelatase"/>
    <property type="match status" value="1"/>
</dbReference>
<dbReference type="SUPFAM" id="SSF53800">
    <property type="entry name" value="Chelatase"/>
    <property type="match status" value="1"/>
</dbReference>
<dbReference type="PROSITE" id="PS00534">
    <property type="entry name" value="FERROCHELATASE"/>
    <property type="match status" value="1"/>
</dbReference>
<keyword id="KW-0963">Cytoplasm</keyword>
<keyword id="KW-0350">Heme biosynthesis</keyword>
<keyword id="KW-0408">Iron</keyword>
<keyword id="KW-0456">Lyase</keyword>
<keyword id="KW-0479">Metal-binding</keyword>
<keyword id="KW-0627">Porphyrin biosynthesis</keyword>
<evidence type="ECO:0000255" key="1">
    <source>
        <dbReference type="HAMAP-Rule" id="MF_00323"/>
    </source>
</evidence>
<gene>
    <name evidence="1" type="primary">hemH</name>
    <name type="ordered locus">YpAngola_A2895</name>
</gene>
<proteinExistence type="inferred from homology"/>